<proteinExistence type="evidence at protein level"/>
<protein>
    <recommendedName>
        <fullName>ATP sulfurylase 4, chloroplastic</fullName>
        <ecNumber evidence="2">2.7.7.4</ecNumber>
    </recommendedName>
</protein>
<evidence type="ECO:0000250" key="1"/>
<evidence type="ECO:0000269" key="2">
    <source>
    </source>
</evidence>
<evidence type="ECO:0000305" key="3"/>
<evidence type="ECO:0000305" key="4">
    <source>
    </source>
</evidence>
<accession>Q9S7D8</accession>
<accession>Q0WWX9</accession>
<keyword id="KW-0067">ATP-binding</keyword>
<keyword id="KW-0150">Chloroplast</keyword>
<keyword id="KW-0547">Nucleotide-binding</keyword>
<keyword id="KW-0548">Nucleotidyltransferase</keyword>
<keyword id="KW-0934">Plastid</keyword>
<keyword id="KW-1185">Reference proteome</keyword>
<keyword id="KW-0808">Transferase</keyword>
<keyword id="KW-0809">Transit peptide</keyword>
<sequence>MASSAAAIVSGSPFRSSPLIHNHHASRYAPGSISVVSLPRQVSRRGLSVKSGLIEPDGGKLMNLVVEESRRRVMKHEAETVPARIKLNRVDLEWVHVLSEGWASPLKGFMRQSEFLQTLHFNSFRLEDGSVVNMSVPIVLAIDDDQKFRIGDSNQVTLVDSVGNPIAILNDIEIYKHPKEERIARTWGTTARGLPYAEEAITKAGNWLIGGDLQVLEPIKYNDGLDRFRLSPSQLREEFIRRGADAVFAFQLRNPVHNGHALLMTDTRRRLLEMGYKNPVLLLNPLGGFTKADDVPLSWRMRQHEKVLEDGVLDPETTVVSIFPSPMLYAGPTEVQWHAKARINAGANFYIVGRDPAGMGHPTEKRDLYDADHGKKVLSMAPGLERLNILPFKVAAYDKTQGKMAFFDPSRSQDFLFISGTKMRGLAKKKENPPDGFMCPSGWKVLVDYYDSLSAETGNGRVSEAVASA</sequence>
<comment type="function">
    <text evidence="2">Sulfate adenylyltransferase. Catalyzes the first step of the sulfate assimilation pathway.</text>
</comment>
<comment type="catalytic activity">
    <reaction evidence="2">
        <text>sulfate + ATP + H(+) = adenosine 5'-phosphosulfate + diphosphate</text>
        <dbReference type="Rhea" id="RHEA:18133"/>
        <dbReference type="ChEBI" id="CHEBI:15378"/>
        <dbReference type="ChEBI" id="CHEBI:16189"/>
        <dbReference type="ChEBI" id="CHEBI:30616"/>
        <dbReference type="ChEBI" id="CHEBI:33019"/>
        <dbReference type="ChEBI" id="CHEBI:58243"/>
        <dbReference type="EC" id="2.7.7.4"/>
    </reaction>
</comment>
<comment type="pathway">
    <text>Sulfur metabolism; hydrogen sulfide biosynthesis; sulfite from sulfate: step 1/3.</text>
</comment>
<comment type="subunit">
    <text evidence="1">Homotetramer.</text>
</comment>
<comment type="subcellular location">
    <subcellularLocation>
        <location evidence="2">Plastid</location>
        <location evidence="2">Chloroplast stroma</location>
    </subcellularLocation>
</comment>
<comment type="tissue specificity">
    <text evidence="2">Expressed in roots and leaves.</text>
</comment>
<comment type="similarity">
    <text evidence="3">Belongs to the sulfate adenylyltransferase family.</text>
</comment>
<feature type="transit peptide" description="Chloroplast" evidence="4">
    <location>
        <begin position="1"/>
        <end position="51"/>
    </location>
</feature>
<feature type="chain" id="PRO_0000410871" description="ATP sulfurylase 4, chloroplastic">
    <location>
        <begin position="52"/>
        <end position="469"/>
    </location>
</feature>
<feature type="sequence conflict" description="In Ref. 5; BAE98369." evidence="3" ref="5">
    <original>D</original>
    <variation>E</variation>
    <location>
        <position position="171"/>
    </location>
</feature>
<gene>
    <name type="primary">APS4</name>
    <name type="ordered locus">At5g43780</name>
    <name type="ORF">MQD19.13</name>
</gene>
<name>APS4_ARATH</name>
<reference key="1">
    <citation type="journal article" date="2000" name="Gene">
        <title>Functional characterization of a gene encoding a fourth ATP sulfurylase isoform from Arabidopsis thaliana.</title>
        <authorList>
            <person name="Hatzfeld Y."/>
            <person name="Lee S."/>
            <person name="Lee M."/>
            <person name="Leustek T."/>
            <person name="Saito K."/>
        </authorList>
    </citation>
    <scope>NUCLEOTIDE SEQUENCE [GENOMIC DNA / MRNA]</scope>
    <scope>SUBCELLULAR LOCATION</scope>
    <scope>TISSUE SPECIFICITY</scope>
    <scope>FUNCTION</scope>
    <scope>CATALYTIC ACTIVITY</scope>
    <scope>TRANSIT PEPTIDE</scope>
    <source>
        <strain>cv. Columbia</strain>
    </source>
</reference>
<reference key="2">
    <citation type="submission" date="1999-04" db="EMBL/GenBank/DDBJ databases">
        <title>Structural analysis of Arabidopsis thaliana chromosome 5. XI.</title>
        <authorList>
            <person name="Kaneko T."/>
            <person name="Katoh T."/>
            <person name="Asamizu E."/>
            <person name="Sato S."/>
            <person name="Nakamura Y."/>
            <person name="Kotani H."/>
            <person name="Tabata S."/>
        </authorList>
    </citation>
    <scope>NUCLEOTIDE SEQUENCE [LARGE SCALE GENOMIC DNA]</scope>
    <source>
        <strain>cv. Columbia</strain>
    </source>
</reference>
<reference key="3">
    <citation type="journal article" date="2017" name="Plant J.">
        <title>Araport11: a complete reannotation of the Arabidopsis thaliana reference genome.</title>
        <authorList>
            <person name="Cheng C.Y."/>
            <person name="Krishnakumar V."/>
            <person name="Chan A.P."/>
            <person name="Thibaud-Nissen F."/>
            <person name="Schobel S."/>
            <person name="Town C.D."/>
        </authorList>
    </citation>
    <scope>GENOME REANNOTATION</scope>
    <source>
        <strain>cv. Columbia</strain>
    </source>
</reference>
<reference key="4">
    <citation type="journal article" date="2003" name="Science">
        <title>Empirical analysis of transcriptional activity in the Arabidopsis genome.</title>
        <authorList>
            <person name="Yamada K."/>
            <person name="Lim J."/>
            <person name="Dale J.M."/>
            <person name="Chen H."/>
            <person name="Shinn P."/>
            <person name="Palm C.J."/>
            <person name="Southwick A.M."/>
            <person name="Wu H.C."/>
            <person name="Kim C.J."/>
            <person name="Nguyen M."/>
            <person name="Pham P.K."/>
            <person name="Cheuk R.F."/>
            <person name="Karlin-Newmann G."/>
            <person name="Liu S.X."/>
            <person name="Lam B."/>
            <person name="Sakano H."/>
            <person name="Wu T."/>
            <person name="Yu G."/>
            <person name="Miranda M."/>
            <person name="Quach H.L."/>
            <person name="Tripp M."/>
            <person name="Chang C.H."/>
            <person name="Lee J.M."/>
            <person name="Toriumi M.J."/>
            <person name="Chan M.M."/>
            <person name="Tang C.C."/>
            <person name="Onodera C.S."/>
            <person name="Deng J.M."/>
            <person name="Akiyama K."/>
            <person name="Ansari Y."/>
            <person name="Arakawa T."/>
            <person name="Banh J."/>
            <person name="Banno F."/>
            <person name="Bowser L."/>
            <person name="Brooks S.Y."/>
            <person name="Carninci P."/>
            <person name="Chao Q."/>
            <person name="Choy N."/>
            <person name="Enju A."/>
            <person name="Goldsmith A.D."/>
            <person name="Gurjal M."/>
            <person name="Hansen N.F."/>
            <person name="Hayashizaki Y."/>
            <person name="Johnson-Hopson C."/>
            <person name="Hsuan V.W."/>
            <person name="Iida K."/>
            <person name="Karnes M."/>
            <person name="Khan S."/>
            <person name="Koesema E."/>
            <person name="Ishida J."/>
            <person name="Jiang P.X."/>
            <person name="Jones T."/>
            <person name="Kawai J."/>
            <person name="Kamiya A."/>
            <person name="Meyers C."/>
            <person name="Nakajima M."/>
            <person name="Narusaka M."/>
            <person name="Seki M."/>
            <person name="Sakurai T."/>
            <person name="Satou M."/>
            <person name="Tamse R."/>
            <person name="Vaysberg M."/>
            <person name="Wallender E.K."/>
            <person name="Wong C."/>
            <person name="Yamamura Y."/>
            <person name="Yuan S."/>
            <person name="Shinozaki K."/>
            <person name="Davis R.W."/>
            <person name="Theologis A."/>
            <person name="Ecker J.R."/>
        </authorList>
    </citation>
    <scope>NUCLEOTIDE SEQUENCE [LARGE SCALE MRNA]</scope>
    <source>
        <strain>cv. Columbia</strain>
    </source>
</reference>
<reference key="5">
    <citation type="submission" date="2006-07" db="EMBL/GenBank/DDBJ databases">
        <title>Large-scale analysis of RIKEN Arabidopsis full-length (RAFL) cDNAs.</title>
        <authorList>
            <person name="Totoki Y."/>
            <person name="Seki M."/>
            <person name="Ishida J."/>
            <person name="Nakajima M."/>
            <person name="Enju A."/>
            <person name="Kamiya A."/>
            <person name="Narusaka M."/>
            <person name="Shin-i T."/>
            <person name="Nakagawa M."/>
            <person name="Sakamoto N."/>
            <person name="Oishi K."/>
            <person name="Kohara Y."/>
            <person name="Kobayashi M."/>
            <person name="Toyoda A."/>
            <person name="Sakaki Y."/>
            <person name="Sakurai T."/>
            <person name="Iida K."/>
            <person name="Akiyama K."/>
            <person name="Satou M."/>
            <person name="Toyoda T."/>
            <person name="Konagaya A."/>
            <person name="Carninci P."/>
            <person name="Kawai J."/>
            <person name="Hayashizaki Y."/>
            <person name="Shinozaki K."/>
        </authorList>
    </citation>
    <scope>NUCLEOTIDE SEQUENCE [LARGE SCALE MRNA]</scope>
    <source>
        <strain>cv. Columbia</strain>
    </source>
</reference>
<organism>
    <name type="scientific">Arabidopsis thaliana</name>
    <name type="common">Mouse-ear cress</name>
    <dbReference type="NCBI Taxonomy" id="3702"/>
    <lineage>
        <taxon>Eukaryota</taxon>
        <taxon>Viridiplantae</taxon>
        <taxon>Streptophyta</taxon>
        <taxon>Embryophyta</taxon>
        <taxon>Tracheophyta</taxon>
        <taxon>Spermatophyta</taxon>
        <taxon>Magnoliopsida</taxon>
        <taxon>eudicotyledons</taxon>
        <taxon>Gunneridae</taxon>
        <taxon>Pentapetalae</taxon>
        <taxon>rosids</taxon>
        <taxon>malvids</taxon>
        <taxon>Brassicales</taxon>
        <taxon>Brassicaceae</taxon>
        <taxon>Camelineae</taxon>
        <taxon>Arabidopsis</taxon>
    </lineage>
</organism>
<dbReference type="EC" id="2.7.7.4" evidence="2"/>
<dbReference type="EMBL" id="AF110407">
    <property type="protein sequence ID" value="AAD26634.1"/>
    <property type="molecule type" value="Genomic_DNA"/>
</dbReference>
<dbReference type="EMBL" id="AJ012586">
    <property type="protein sequence ID" value="CAB42640.1"/>
    <property type="molecule type" value="mRNA"/>
</dbReference>
<dbReference type="EMBL" id="AB026651">
    <property type="protein sequence ID" value="BAB11306.1"/>
    <property type="molecule type" value="Genomic_DNA"/>
</dbReference>
<dbReference type="EMBL" id="CP002688">
    <property type="protein sequence ID" value="AED95009.1"/>
    <property type="molecule type" value="Genomic_DNA"/>
</dbReference>
<dbReference type="EMBL" id="AY072193">
    <property type="protein sequence ID" value="AAL60015.1"/>
    <property type="molecule type" value="mRNA"/>
</dbReference>
<dbReference type="EMBL" id="AY117323">
    <property type="protein sequence ID" value="AAM51398.1"/>
    <property type="molecule type" value="mRNA"/>
</dbReference>
<dbReference type="EMBL" id="AK226204">
    <property type="protein sequence ID" value="BAE98369.1"/>
    <property type="molecule type" value="mRNA"/>
</dbReference>
<dbReference type="PIR" id="T52659">
    <property type="entry name" value="T52659"/>
</dbReference>
<dbReference type="RefSeq" id="NP_199191.1">
    <property type="nucleotide sequence ID" value="NM_123745.6"/>
</dbReference>
<dbReference type="SMR" id="Q9S7D8"/>
<dbReference type="BioGRID" id="19650">
    <property type="interactions" value="1"/>
</dbReference>
<dbReference type="FunCoup" id="Q9S7D8">
    <property type="interactions" value="2310"/>
</dbReference>
<dbReference type="IntAct" id="Q9S7D8">
    <property type="interactions" value="1"/>
</dbReference>
<dbReference type="STRING" id="3702.Q9S7D8"/>
<dbReference type="PaxDb" id="3702-AT5G43780.1"/>
<dbReference type="ProteomicsDB" id="244463"/>
<dbReference type="EnsemblPlants" id="AT5G43780.1">
    <property type="protein sequence ID" value="AT5G43780.1"/>
    <property type="gene ID" value="AT5G43780"/>
</dbReference>
<dbReference type="GeneID" id="834400"/>
<dbReference type="Gramene" id="AT5G43780.1">
    <property type="protein sequence ID" value="AT5G43780.1"/>
    <property type="gene ID" value="AT5G43780"/>
</dbReference>
<dbReference type="KEGG" id="ath:AT5G43780"/>
<dbReference type="Araport" id="AT5G43780"/>
<dbReference type="TAIR" id="AT5G43780">
    <property type="gene designation" value="APS4"/>
</dbReference>
<dbReference type="eggNOG" id="KOG0636">
    <property type="taxonomic scope" value="Eukaryota"/>
</dbReference>
<dbReference type="HOGENOM" id="CLU_009463_2_0_1"/>
<dbReference type="InParanoid" id="Q9S7D8"/>
<dbReference type="OMA" id="KGFMRQS"/>
<dbReference type="PhylomeDB" id="Q9S7D8"/>
<dbReference type="BioCyc" id="MetaCyc:AT5G43780-MONOMER"/>
<dbReference type="BRENDA" id="2.7.7.4">
    <property type="organism ID" value="399"/>
</dbReference>
<dbReference type="UniPathway" id="UPA00140">
    <property type="reaction ID" value="UER00204"/>
</dbReference>
<dbReference type="PRO" id="PR:Q9S7D8"/>
<dbReference type="Proteomes" id="UP000006548">
    <property type="component" value="Chromosome 5"/>
</dbReference>
<dbReference type="ExpressionAtlas" id="Q9S7D8">
    <property type="expression patterns" value="baseline and differential"/>
</dbReference>
<dbReference type="GO" id="GO:0009507">
    <property type="term" value="C:chloroplast"/>
    <property type="evidence" value="ECO:0000314"/>
    <property type="project" value="TAIR"/>
</dbReference>
<dbReference type="GO" id="GO:0009570">
    <property type="term" value="C:chloroplast stroma"/>
    <property type="evidence" value="ECO:0007005"/>
    <property type="project" value="TAIR"/>
</dbReference>
<dbReference type="GO" id="GO:0005739">
    <property type="term" value="C:mitochondrion"/>
    <property type="evidence" value="ECO:0007005"/>
    <property type="project" value="TAIR"/>
</dbReference>
<dbReference type="GO" id="GO:0009536">
    <property type="term" value="C:plastid"/>
    <property type="evidence" value="ECO:0007005"/>
    <property type="project" value="TAIR"/>
</dbReference>
<dbReference type="GO" id="GO:0005524">
    <property type="term" value="F:ATP binding"/>
    <property type="evidence" value="ECO:0007669"/>
    <property type="project" value="UniProtKB-KW"/>
</dbReference>
<dbReference type="GO" id="GO:0004781">
    <property type="term" value="F:sulfate adenylyltransferase (ATP) activity"/>
    <property type="evidence" value="ECO:0000315"/>
    <property type="project" value="TAIR"/>
</dbReference>
<dbReference type="GO" id="GO:0070814">
    <property type="term" value="P:hydrogen sulfide biosynthetic process"/>
    <property type="evidence" value="ECO:0007669"/>
    <property type="project" value="UniProtKB-UniPathway"/>
</dbReference>
<dbReference type="GO" id="GO:0000103">
    <property type="term" value="P:sulfate assimilation"/>
    <property type="evidence" value="ECO:0000304"/>
    <property type="project" value="TAIR"/>
</dbReference>
<dbReference type="CDD" id="cd00517">
    <property type="entry name" value="ATPS"/>
    <property type="match status" value="1"/>
</dbReference>
<dbReference type="FunFam" id="3.10.400.10:FF:000002">
    <property type="entry name" value="ATP sulfurylase 2"/>
    <property type="match status" value="1"/>
</dbReference>
<dbReference type="FunFam" id="3.40.50.620:FF:000006">
    <property type="entry name" value="bifunctional 3'-phosphoadenosine 5'-phosphosulfate synthase 1"/>
    <property type="match status" value="1"/>
</dbReference>
<dbReference type="Gene3D" id="3.40.50.620">
    <property type="entry name" value="HUPs"/>
    <property type="match status" value="1"/>
</dbReference>
<dbReference type="Gene3D" id="3.10.400.10">
    <property type="entry name" value="Sulfate adenylyltransferase"/>
    <property type="match status" value="1"/>
</dbReference>
<dbReference type="InterPro" id="IPR025980">
    <property type="entry name" value="ATP-Sase_PUA-like_dom"/>
</dbReference>
<dbReference type="InterPro" id="IPR015947">
    <property type="entry name" value="PUA-like_sf"/>
</dbReference>
<dbReference type="InterPro" id="IPR014729">
    <property type="entry name" value="Rossmann-like_a/b/a_fold"/>
</dbReference>
<dbReference type="InterPro" id="IPR024951">
    <property type="entry name" value="Sulfurylase_cat_dom"/>
</dbReference>
<dbReference type="InterPro" id="IPR002650">
    <property type="entry name" value="Sulphate_adenylyltransferase"/>
</dbReference>
<dbReference type="NCBIfam" id="TIGR00339">
    <property type="entry name" value="sopT"/>
    <property type="match status" value="1"/>
</dbReference>
<dbReference type="PANTHER" id="PTHR11055:SF39">
    <property type="entry name" value="ATP SULFURYLASE 4, CHLOROPLASTIC"/>
    <property type="match status" value="1"/>
</dbReference>
<dbReference type="PANTHER" id="PTHR11055">
    <property type="entry name" value="BIFUNCTIONAL 3'-PHOSPHOADENOSINE 5'-PHOSPHOSULFATE SYNTHASE"/>
    <property type="match status" value="1"/>
</dbReference>
<dbReference type="Pfam" id="PF01747">
    <property type="entry name" value="ATP-sulfurylase"/>
    <property type="match status" value="1"/>
</dbReference>
<dbReference type="Pfam" id="PF14306">
    <property type="entry name" value="PUA_2"/>
    <property type="match status" value="1"/>
</dbReference>
<dbReference type="SUPFAM" id="SSF52374">
    <property type="entry name" value="Nucleotidylyl transferase"/>
    <property type="match status" value="1"/>
</dbReference>
<dbReference type="SUPFAM" id="SSF88697">
    <property type="entry name" value="PUA domain-like"/>
    <property type="match status" value="1"/>
</dbReference>